<accession>P30779</accession>
<sequence>MAAKEVKFGRSAREKMLKGVDILADAVKVTLGPKGRNVVIDKSFGAPRITKDGVSVAKEIELEDKFENMGAQLVREVASKTNDIAGDGTTTATVLAQAIVREGAKAVAAGMNPMDLKRGIDLAVAEVVKDLQAKAKKINTSEEVAQVGTISANGERQIGLDIAEAMQRVGNEGVITVEEAKTAETELEVVEGMQFDRGYLSPYFVTNPEKMVADLEDAYILLHEKKLSNLQAMLPVLEAVVQTGKPLVIIAEDVEGEALATLVVNKLRGGLKIAAVKAPGFGDRRKAMLEDIAILTGGTVISEDLGIKLESVTLDMLGKSKKVSISKENTTIVDGAGQKSDIEGRVAQIKAQIEETTSDYDREKLQERLAKLAGGVAVIRVGGSTEVEVKEKKDRIDDALNATRAAVQEGIVPGGGVALLRSSTKITVKGVNDDQEAGINIVRKALQSLVRQIAENAGDEASIVVGKILDKNEDNYGYNAQTGEYGDLIALGIVDPVKVVRTALQNAASVASLLITTEAMIAELPKKESAMPQMPGGGMGGMDF</sequence>
<protein>
    <recommendedName>
        <fullName evidence="1">Chaperonin GroEL</fullName>
        <ecNumber evidence="1">5.6.1.7</ecNumber>
    </recommendedName>
    <alternativeName>
        <fullName evidence="1">60 kDa chaperonin</fullName>
    </alternativeName>
    <alternativeName>
        <fullName evidence="1">Chaperonin-60</fullName>
        <shortName evidence="1">Cpn60</shortName>
    </alternativeName>
</protein>
<proteinExistence type="inferred from homology"/>
<name>CH60_AGRFC</name>
<dbReference type="EC" id="5.6.1.7" evidence="1"/>
<dbReference type="EMBL" id="X68263">
    <property type="protein sequence ID" value="CAA48331.1"/>
    <property type="molecule type" value="Genomic_DNA"/>
</dbReference>
<dbReference type="EMBL" id="AE007869">
    <property type="protein sequence ID" value="AAK86491.1"/>
    <property type="molecule type" value="Genomic_DNA"/>
</dbReference>
<dbReference type="PIR" id="AD2660">
    <property type="entry name" value="AD2660"/>
</dbReference>
<dbReference type="PIR" id="B97442">
    <property type="entry name" value="B97442"/>
</dbReference>
<dbReference type="PIR" id="S23918">
    <property type="entry name" value="S23918"/>
</dbReference>
<dbReference type="RefSeq" id="NP_353706.1">
    <property type="nucleotide sequence ID" value="NC_003062.2"/>
</dbReference>
<dbReference type="RefSeq" id="WP_006313163.1">
    <property type="nucleotide sequence ID" value="NC_003062.2"/>
</dbReference>
<dbReference type="SMR" id="P30779"/>
<dbReference type="STRING" id="176299.Atu0682"/>
<dbReference type="EnsemblBacteria" id="AAK86491">
    <property type="protein sequence ID" value="AAK86491"/>
    <property type="gene ID" value="Atu0682"/>
</dbReference>
<dbReference type="GeneID" id="1132720"/>
<dbReference type="KEGG" id="atu:Atu0682"/>
<dbReference type="PATRIC" id="fig|176299.10.peg.678"/>
<dbReference type="eggNOG" id="COG0459">
    <property type="taxonomic scope" value="Bacteria"/>
</dbReference>
<dbReference type="HOGENOM" id="CLU_016503_3_0_5"/>
<dbReference type="OrthoDB" id="9766614at2"/>
<dbReference type="PhylomeDB" id="P30779"/>
<dbReference type="BioCyc" id="AGRO:ATU0682-MONOMER"/>
<dbReference type="Proteomes" id="UP000000813">
    <property type="component" value="Chromosome circular"/>
</dbReference>
<dbReference type="GO" id="GO:0005737">
    <property type="term" value="C:cytoplasm"/>
    <property type="evidence" value="ECO:0007669"/>
    <property type="project" value="UniProtKB-SubCell"/>
</dbReference>
<dbReference type="GO" id="GO:0005524">
    <property type="term" value="F:ATP binding"/>
    <property type="evidence" value="ECO:0007669"/>
    <property type="project" value="UniProtKB-UniRule"/>
</dbReference>
<dbReference type="GO" id="GO:0140662">
    <property type="term" value="F:ATP-dependent protein folding chaperone"/>
    <property type="evidence" value="ECO:0007669"/>
    <property type="project" value="InterPro"/>
</dbReference>
<dbReference type="GO" id="GO:0016853">
    <property type="term" value="F:isomerase activity"/>
    <property type="evidence" value="ECO:0007669"/>
    <property type="project" value="UniProtKB-KW"/>
</dbReference>
<dbReference type="GO" id="GO:0051082">
    <property type="term" value="F:unfolded protein binding"/>
    <property type="evidence" value="ECO:0007669"/>
    <property type="project" value="UniProtKB-UniRule"/>
</dbReference>
<dbReference type="GO" id="GO:0042026">
    <property type="term" value="P:protein refolding"/>
    <property type="evidence" value="ECO:0007669"/>
    <property type="project" value="UniProtKB-UniRule"/>
</dbReference>
<dbReference type="CDD" id="cd03344">
    <property type="entry name" value="GroEL"/>
    <property type="match status" value="1"/>
</dbReference>
<dbReference type="FunFam" id="1.10.560.10:FF:000001">
    <property type="entry name" value="60 kDa chaperonin"/>
    <property type="match status" value="1"/>
</dbReference>
<dbReference type="FunFam" id="3.50.7.10:FF:000001">
    <property type="entry name" value="60 kDa chaperonin"/>
    <property type="match status" value="1"/>
</dbReference>
<dbReference type="Gene3D" id="3.50.7.10">
    <property type="entry name" value="GroEL"/>
    <property type="match status" value="1"/>
</dbReference>
<dbReference type="Gene3D" id="1.10.560.10">
    <property type="entry name" value="GroEL-like equatorial domain"/>
    <property type="match status" value="1"/>
</dbReference>
<dbReference type="Gene3D" id="3.30.260.10">
    <property type="entry name" value="TCP-1-like chaperonin intermediate domain"/>
    <property type="match status" value="1"/>
</dbReference>
<dbReference type="HAMAP" id="MF_00600">
    <property type="entry name" value="CH60"/>
    <property type="match status" value="1"/>
</dbReference>
<dbReference type="InterPro" id="IPR018370">
    <property type="entry name" value="Chaperonin_Cpn60_CS"/>
</dbReference>
<dbReference type="InterPro" id="IPR001844">
    <property type="entry name" value="Cpn60/GroEL"/>
</dbReference>
<dbReference type="InterPro" id="IPR002423">
    <property type="entry name" value="Cpn60/GroEL/TCP-1"/>
</dbReference>
<dbReference type="InterPro" id="IPR027409">
    <property type="entry name" value="GroEL-like_apical_dom_sf"/>
</dbReference>
<dbReference type="InterPro" id="IPR027413">
    <property type="entry name" value="GROEL-like_equatorial_sf"/>
</dbReference>
<dbReference type="InterPro" id="IPR027410">
    <property type="entry name" value="TCP-1-like_intermed_sf"/>
</dbReference>
<dbReference type="NCBIfam" id="TIGR02348">
    <property type="entry name" value="GroEL"/>
    <property type="match status" value="1"/>
</dbReference>
<dbReference type="NCBIfam" id="NF000592">
    <property type="entry name" value="PRK00013.1"/>
    <property type="match status" value="1"/>
</dbReference>
<dbReference type="NCBIfam" id="NF009487">
    <property type="entry name" value="PRK12849.1"/>
    <property type="match status" value="1"/>
</dbReference>
<dbReference type="NCBIfam" id="NF009488">
    <property type="entry name" value="PRK12850.1"/>
    <property type="match status" value="1"/>
</dbReference>
<dbReference type="NCBIfam" id="NF009489">
    <property type="entry name" value="PRK12851.1"/>
    <property type="match status" value="1"/>
</dbReference>
<dbReference type="PANTHER" id="PTHR45633">
    <property type="entry name" value="60 KDA HEAT SHOCK PROTEIN, MITOCHONDRIAL"/>
    <property type="match status" value="1"/>
</dbReference>
<dbReference type="Pfam" id="PF00118">
    <property type="entry name" value="Cpn60_TCP1"/>
    <property type="match status" value="1"/>
</dbReference>
<dbReference type="PRINTS" id="PR00298">
    <property type="entry name" value="CHAPERONIN60"/>
</dbReference>
<dbReference type="SUPFAM" id="SSF52029">
    <property type="entry name" value="GroEL apical domain-like"/>
    <property type="match status" value="1"/>
</dbReference>
<dbReference type="SUPFAM" id="SSF48592">
    <property type="entry name" value="GroEL equatorial domain-like"/>
    <property type="match status" value="1"/>
</dbReference>
<dbReference type="SUPFAM" id="SSF54849">
    <property type="entry name" value="GroEL-intermediate domain like"/>
    <property type="match status" value="1"/>
</dbReference>
<dbReference type="PROSITE" id="PS00296">
    <property type="entry name" value="CHAPERONINS_CPN60"/>
    <property type="match status" value="1"/>
</dbReference>
<reference key="1">
    <citation type="journal article" date="1993" name="J. Bacteriol.">
        <title>Heat shock transcription of the groESL operon of Agrobacterium tumefaciens may involve a hairpin-loop structure.</title>
        <authorList>
            <person name="Segal G."/>
            <person name="Ron E.Z."/>
        </authorList>
    </citation>
    <scope>NUCLEOTIDE SEQUENCE [GENOMIC DNA]</scope>
</reference>
<reference key="2">
    <citation type="journal article" date="2001" name="Science">
        <title>The genome of the natural genetic engineer Agrobacterium tumefaciens C58.</title>
        <authorList>
            <person name="Wood D.W."/>
            <person name="Setubal J.C."/>
            <person name="Kaul R."/>
            <person name="Monks D.E."/>
            <person name="Kitajima J.P."/>
            <person name="Okura V.K."/>
            <person name="Zhou Y."/>
            <person name="Chen L."/>
            <person name="Wood G.E."/>
            <person name="Almeida N.F. Jr."/>
            <person name="Woo L."/>
            <person name="Chen Y."/>
            <person name="Paulsen I.T."/>
            <person name="Eisen J.A."/>
            <person name="Karp P.D."/>
            <person name="Bovee D. Sr."/>
            <person name="Chapman P."/>
            <person name="Clendenning J."/>
            <person name="Deatherage G."/>
            <person name="Gillet W."/>
            <person name="Grant C."/>
            <person name="Kutyavin T."/>
            <person name="Levy R."/>
            <person name="Li M.-J."/>
            <person name="McClelland E."/>
            <person name="Palmieri A."/>
            <person name="Raymond C."/>
            <person name="Rouse G."/>
            <person name="Saenphimmachak C."/>
            <person name="Wu Z."/>
            <person name="Romero P."/>
            <person name="Gordon D."/>
            <person name="Zhang S."/>
            <person name="Yoo H."/>
            <person name="Tao Y."/>
            <person name="Biddle P."/>
            <person name="Jung M."/>
            <person name="Krespan W."/>
            <person name="Perry M."/>
            <person name="Gordon-Kamm B."/>
            <person name="Liao L."/>
            <person name="Kim S."/>
            <person name="Hendrick C."/>
            <person name="Zhao Z.-Y."/>
            <person name="Dolan M."/>
            <person name="Chumley F."/>
            <person name="Tingey S.V."/>
            <person name="Tomb J.-F."/>
            <person name="Gordon M.P."/>
            <person name="Olson M.V."/>
            <person name="Nester E.W."/>
        </authorList>
    </citation>
    <scope>NUCLEOTIDE SEQUENCE [LARGE SCALE GENOMIC DNA]</scope>
    <source>
        <strain>C58 / ATCC 33970</strain>
    </source>
</reference>
<reference key="3">
    <citation type="journal article" date="2001" name="Science">
        <title>Genome sequence of the plant pathogen and biotechnology agent Agrobacterium tumefaciens C58.</title>
        <authorList>
            <person name="Goodner B."/>
            <person name="Hinkle G."/>
            <person name="Gattung S."/>
            <person name="Miller N."/>
            <person name="Blanchard M."/>
            <person name="Qurollo B."/>
            <person name="Goldman B.S."/>
            <person name="Cao Y."/>
            <person name="Askenazi M."/>
            <person name="Halling C."/>
            <person name="Mullin L."/>
            <person name="Houmiel K."/>
            <person name="Gordon J."/>
            <person name="Vaudin M."/>
            <person name="Iartchouk O."/>
            <person name="Epp A."/>
            <person name="Liu F."/>
            <person name="Wollam C."/>
            <person name="Allinger M."/>
            <person name="Doughty D."/>
            <person name="Scott C."/>
            <person name="Lappas C."/>
            <person name="Markelz B."/>
            <person name="Flanagan C."/>
            <person name="Crowell C."/>
            <person name="Gurson J."/>
            <person name="Lomo C."/>
            <person name="Sear C."/>
            <person name="Strub G."/>
            <person name="Cielo C."/>
            <person name="Slater S."/>
        </authorList>
    </citation>
    <scope>NUCLEOTIDE SEQUENCE [LARGE SCALE GENOMIC DNA]</scope>
    <source>
        <strain>C58 / ATCC 33970</strain>
    </source>
</reference>
<evidence type="ECO:0000255" key="1">
    <source>
        <dbReference type="HAMAP-Rule" id="MF_00600"/>
    </source>
</evidence>
<evidence type="ECO:0000305" key="2"/>
<keyword id="KW-0067">ATP-binding</keyword>
<keyword id="KW-0143">Chaperone</keyword>
<keyword id="KW-0963">Cytoplasm</keyword>
<keyword id="KW-0413">Isomerase</keyword>
<keyword id="KW-0547">Nucleotide-binding</keyword>
<keyword id="KW-1185">Reference proteome</keyword>
<gene>
    <name evidence="1" type="primary">groEL</name>
    <name evidence="1" type="synonym">groL</name>
    <name type="synonym">mopA</name>
    <name type="ordered locus">Atu0682</name>
    <name type="ORF">AGR_C_1220</name>
</gene>
<comment type="function">
    <text evidence="1">Together with its co-chaperonin GroES, plays an essential role in assisting protein folding. The GroEL-GroES system forms a nano-cage that allows encapsulation of the non-native substrate proteins and provides a physical environment optimized to promote and accelerate protein folding.</text>
</comment>
<comment type="catalytic activity">
    <reaction evidence="1">
        <text>ATP + H2O + a folded polypeptide = ADP + phosphate + an unfolded polypeptide.</text>
        <dbReference type="EC" id="5.6.1.7"/>
    </reaction>
</comment>
<comment type="subunit">
    <text evidence="1">Forms a cylinder of 14 subunits composed of two heptameric rings stacked back-to-back. Interacts with the co-chaperonin GroES.</text>
</comment>
<comment type="subcellular location">
    <subcellularLocation>
        <location evidence="1">Cytoplasm</location>
    </subcellularLocation>
</comment>
<comment type="similarity">
    <text evidence="1">Belongs to the chaperonin (HSP60) family.</text>
</comment>
<organism>
    <name type="scientific">Agrobacterium fabrum (strain C58 / ATCC 33970)</name>
    <name type="common">Agrobacterium tumefaciens (strain C58)</name>
    <dbReference type="NCBI Taxonomy" id="176299"/>
    <lineage>
        <taxon>Bacteria</taxon>
        <taxon>Pseudomonadati</taxon>
        <taxon>Pseudomonadota</taxon>
        <taxon>Alphaproteobacteria</taxon>
        <taxon>Hyphomicrobiales</taxon>
        <taxon>Rhizobiaceae</taxon>
        <taxon>Rhizobium/Agrobacterium group</taxon>
        <taxon>Agrobacterium</taxon>
        <taxon>Agrobacterium tumefaciens complex</taxon>
    </lineage>
</organism>
<feature type="chain" id="PRO_0000063256" description="Chaperonin GroEL">
    <location>
        <begin position="1"/>
        <end position="544"/>
    </location>
</feature>
<feature type="binding site" evidence="1">
    <location>
        <begin position="30"/>
        <end position="33"/>
    </location>
    <ligand>
        <name>ATP</name>
        <dbReference type="ChEBI" id="CHEBI:30616"/>
    </ligand>
</feature>
<feature type="binding site" evidence="1">
    <location>
        <position position="51"/>
    </location>
    <ligand>
        <name>ATP</name>
        <dbReference type="ChEBI" id="CHEBI:30616"/>
    </ligand>
</feature>
<feature type="binding site" evidence="1">
    <location>
        <begin position="87"/>
        <end position="91"/>
    </location>
    <ligand>
        <name>ATP</name>
        <dbReference type="ChEBI" id="CHEBI:30616"/>
    </ligand>
</feature>
<feature type="binding site" evidence="1">
    <location>
        <position position="415"/>
    </location>
    <ligand>
        <name>ATP</name>
        <dbReference type="ChEBI" id="CHEBI:30616"/>
    </ligand>
</feature>
<feature type="binding site" evidence="1">
    <location>
        <position position="495"/>
    </location>
    <ligand>
        <name>ATP</name>
        <dbReference type="ChEBI" id="CHEBI:30616"/>
    </ligand>
</feature>
<feature type="sequence conflict" description="In Ref. 1." evidence="2" ref="1">
    <original>F</original>
    <variation>P</variation>
    <location>
        <position position="8"/>
    </location>
</feature>
<feature type="sequence conflict" description="In Ref. 1." evidence="2" ref="1">
    <original>R</original>
    <variation>A</variation>
    <location>
        <position position="10"/>
    </location>
</feature>
<feature type="sequence conflict" description="In Ref. 1; CAA48331." evidence="2" ref="1">
    <original>R</original>
    <variation>P</variation>
    <location>
        <position position="48"/>
    </location>
</feature>
<feature type="sequence conflict" description="In Ref. 1; CAA48331." evidence="2" ref="1">
    <original>A</original>
    <variation>R</variation>
    <location>
        <position position="258"/>
    </location>
</feature>
<feature type="sequence conflict" description="In Ref. 1; CAA48331." evidence="2" ref="1">
    <original>L</original>
    <variation>V</variation>
    <location>
        <position position="513"/>
    </location>
</feature>